<organism>
    <name type="scientific">Arabidopsis thaliana</name>
    <name type="common">Mouse-ear cress</name>
    <dbReference type="NCBI Taxonomy" id="3702"/>
    <lineage>
        <taxon>Eukaryota</taxon>
        <taxon>Viridiplantae</taxon>
        <taxon>Streptophyta</taxon>
        <taxon>Embryophyta</taxon>
        <taxon>Tracheophyta</taxon>
        <taxon>Spermatophyta</taxon>
        <taxon>Magnoliopsida</taxon>
        <taxon>eudicotyledons</taxon>
        <taxon>Gunneridae</taxon>
        <taxon>Pentapetalae</taxon>
        <taxon>rosids</taxon>
        <taxon>malvids</taxon>
        <taxon>Brassicales</taxon>
        <taxon>Brassicaceae</taxon>
        <taxon>Camelineae</taxon>
        <taxon>Arabidopsis</taxon>
    </lineage>
</organism>
<reference key="1">
    <citation type="journal article" date="1995" name="Plant Cell">
        <title>AGL15, a MADS domain protein expressed in developing embryos.</title>
        <authorList>
            <person name="Heck G.R."/>
            <person name="Perry S.E."/>
            <person name="Nichols K.N."/>
            <person name="Fernandez D.E."/>
        </authorList>
    </citation>
    <scope>NUCLEOTIDE SEQUENCE [GENOMIC DNA]</scope>
    <source>
        <strain>cv. Wassilewskija</strain>
    </source>
</reference>
<reference key="2">
    <citation type="journal article" date="1998" name="DNA Res.">
        <title>Structural analysis of Arabidopsis thaliana chromosome 5. V. Sequence features of the regions of 1,381,565 bp covered by twenty one physically assigned P1 and TAC clones.</title>
        <authorList>
            <person name="Kaneko T."/>
            <person name="Kotani H."/>
            <person name="Nakamura Y."/>
            <person name="Sato S."/>
            <person name="Asamizu E."/>
            <person name="Miyajima N."/>
            <person name="Tabata S."/>
        </authorList>
    </citation>
    <scope>NUCLEOTIDE SEQUENCE [LARGE SCALE GENOMIC DNA]</scope>
    <source>
        <strain>cv. Columbia</strain>
    </source>
</reference>
<reference key="3">
    <citation type="journal article" date="1997" name="DNA Res.">
        <title>Structural analysis of Arabidopsis thaliana chromosome 5. I. Sequence features of the 1.6 Mb regions covered by twenty physically assigned P1 clones.</title>
        <authorList>
            <person name="Sato S."/>
            <person name="Kotani H."/>
            <person name="Nakamura Y."/>
            <person name="Kaneko T."/>
            <person name="Asamizu E."/>
            <person name="Fukami M."/>
            <person name="Miyajima N."/>
            <person name="Tabata S."/>
        </authorList>
    </citation>
    <scope>NUCLEOTIDE SEQUENCE [LARGE SCALE GENOMIC DNA]</scope>
    <source>
        <strain>cv. Columbia</strain>
    </source>
</reference>
<reference key="4">
    <citation type="journal article" date="2017" name="Plant J.">
        <title>Araport11: a complete reannotation of the Arabidopsis thaliana reference genome.</title>
        <authorList>
            <person name="Cheng C.Y."/>
            <person name="Krishnakumar V."/>
            <person name="Chan A.P."/>
            <person name="Thibaud-Nissen F."/>
            <person name="Schobel S."/>
            <person name="Town C.D."/>
        </authorList>
    </citation>
    <scope>GENOME REANNOTATION</scope>
    <source>
        <strain>cv. Columbia</strain>
    </source>
</reference>
<reference key="5">
    <citation type="journal article" date="1995" name="Plant Cell">
        <title>Diverse roles for MADS box genes in Arabidopsis development.</title>
        <authorList>
            <person name="Rounsley S.D."/>
            <person name="Ditta G.S."/>
            <person name="Yanofsky M.F."/>
        </authorList>
    </citation>
    <scope>NUCLEOTIDE SEQUENCE [MRNA] OF 7-268</scope>
    <source>
        <strain>cv. Landsberg erecta</strain>
        <tissue>Flower</tissue>
    </source>
</reference>
<reference key="6">
    <citation type="journal article" date="1996" name="Plant Cell">
        <title>The MADS domain protein AGL15 localizes to the nucleus during early stages of seed development.</title>
        <authorList>
            <person name="Perry S.E."/>
            <person name="Nichols K.W."/>
            <person name="Fernandez D.E."/>
        </authorList>
    </citation>
    <scope>FUNCTION</scope>
    <scope>TISSUE SPECIFICITY</scope>
    <scope>DEVELOPMENTAL STAGE</scope>
    <scope>SUBCELLULAR LOCATION</scope>
    <source>
        <strain>cv. Wassilewskija</strain>
    </source>
</reference>
<reference key="7">
    <citation type="journal article" date="1999" name="Plant Physiol.">
        <title>The MADS-domain protein AGAMOUS-like 15 accumulates in embryonic tissues with diverse origins.</title>
        <authorList>
            <person name="Perry S.E."/>
            <person name="Lehti M.D."/>
            <person name="Fernandez D.E."/>
        </authorList>
    </citation>
    <scope>FUNCTION</scope>
    <scope>TISSUE SPECIFICITY</scope>
    <scope>DEVELOPMENTAL STAGE</scope>
    <source>
        <strain>cv. Landsberg erecta</strain>
    </source>
</reference>
<reference key="8">
    <citation type="journal article" date="2000" name="Plant Cell">
        <title>The embryo MADS domain factor AGL15 acts postembryonically. Inhibition of perianth senescence and abscission via constitutive expression.</title>
        <authorList>
            <person name="Fernandez D.E."/>
            <person name="Heck G.R."/>
            <person name="Perry S.E."/>
            <person name="Patterson S.E."/>
            <person name="Bleecker A.B."/>
            <person name="Fang S.-C."/>
        </authorList>
    </citation>
    <scope>FUNCTION</scope>
    <scope>TISSUE SPECIFICITY</scope>
    <scope>DEVELOPMENTAL STAGE</scope>
    <scope>SUBCELLULAR LOCATION</scope>
</reference>
<reference key="9">
    <citation type="journal article" date="2002" name="Plant Physiol.">
        <title>Effect of regulated overexpression of the MADS domain factor AGL15 on flower senescence and fruit maturation.</title>
        <authorList>
            <person name="Fang S.-C."/>
            <person name="Fernandez D.E."/>
        </authorList>
    </citation>
    <scope>FUNCTION</scope>
</reference>
<reference key="10">
    <citation type="journal article" date="2003" name="J. Biol. Chem.">
        <title>Binding site selection for the plant MADS domain protein AGL15: an in vitro and in vivo study.</title>
        <authorList>
            <person name="Tang W."/>
            <person name="Perry S.E."/>
        </authorList>
    </citation>
    <scope>FUNCTION</scope>
</reference>
<reference key="11">
    <citation type="journal article" date="2003" name="Mol. Biol. Evol.">
        <title>Evolution and divergence of the MADS-box gene family based on genome-wide expression analyses.</title>
        <authorList>
            <person name="Kofuji R."/>
            <person name="Sumikawa N."/>
            <person name="Yamasaki M."/>
            <person name="Kondo K."/>
            <person name="Ueda K."/>
            <person name="Ito M."/>
            <person name="Hasebe M."/>
        </authorList>
    </citation>
    <scope>TISSUE SPECIFICITY</scope>
    <scope>GENE FAMILY</scope>
    <source>
        <strain>cv. Columbia</strain>
    </source>
</reference>
<reference key="12">
    <citation type="journal article" date="2003" name="Mol. Phylogenet. Evol.">
        <title>The major clades of MADS-box genes and their role in the development and evolution of flowering plants.</title>
        <authorList>
            <person name="Becker A."/>
            <person name="Theissen G."/>
        </authorList>
    </citation>
    <scope>FUNCTION</scope>
</reference>
<reference key="13">
    <citation type="journal article" date="2003" name="Plant Cell">
        <title>Molecular and phylogenetic analyses of the complete MADS-box transcription factor family in Arabidopsis: new openings to the MADS world.</title>
        <authorList>
            <person name="Parenicova L."/>
            <person name="de Folter S."/>
            <person name="Kieffer M."/>
            <person name="Horner D.S."/>
            <person name="Favalli C."/>
            <person name="Busscher J."/>
            <person name="Cook H.E."/>
            <person name="Ingram R.M."/>
            <person name="Kater M.M."/>
            <person name="Davies B."/>
            <person name="Angenent G.C."/>
            <person name="Colombo L."/>
        </authorList>
    </citation>
    <scope>TISSUE SPECIFICITY</scope>
    <scope>GENE FAMILY</scope>
    <source>
        <strain>cv. Columbia</strain>
        <tissue>Rosette leaf</tissue>
    </source>
</reference>
<reference key="14">
    <citation type="journal article" date="2004" name="Plant Cell">
        <title>The embryo MADS domain protein AGAMOUS-Like 15 directly regulates expression of a gene encoding an enzyme involved in gibberellin metabolism.</title>
        <authorList>
            <person name="Wang H."/>
            <person name="Caruso L.V."/>
            <person name="Downie A.B."/>
            <person name="Perry S.E."/>
        </authorList>
    </citation>
    <scope>FUNCTION</scope>
</reference>
<reference key="15">
    <citation type="journal article" date="2005" name="Plant Cell">
        <title>Comprehensive interaction map of the Arabidopsis MADS Box transcription factors.</title>
        <authorList>
            <person name="de Folter S."/>
            <person name="Immink R.G.H."/>
            <person name="Kieffer M."/>
            <person name="Parenicova L."/>
            <person name="Henz S.R."/>
            <person name="Weigel D."/>
            <person name="Busscher M."/>
            <person name="Kooiker M."/>
            <person name="Colombo L."/>
            <person name="Kater M.M."/>
            <person name="Davies B."/>
            <person name="Angenent G.C."/>
        </authorList>
    </citation>
    <scope>INTERACTION WITH AGL15; SVP; AGL24; AP1; AGL6; AG; AGL1; AGL11; AGL5; AGL16; SOC1 AND AGL21</scope>
</reference>
<reference key="16">
    <citation type="journal article" date="2005" name="Plant J.">
        <title>Control of expression and autoregulation of AGL15, a member of the MADS-box family.</title>
        <authorList>
            <person name="Zhu C."/>
            <person name="Perry S.E."/>
        </authorList>
    </citation>
    <scope>FUNCTION</scope>
    <scope>TISSUE SPECIFICITY</scope>
    <scope>DEVELOPMENTAL STAGE</scope>
    <scope>INDUCTION BY AUXIN</scope>
    <source>
        <strain>cv. Wassilewskija</strain>
    </source>
</reference>
<reference key="17">
    <citation type="journal article" date="2005" name="Plant Mol. Biol.">
        <title>Expression of MADS-box genes during the embryonic phase in Arabidopsis.</title>
        <authorList>
            <person name="Lehti-Shiu M.D."/>
            <person name="Adamczyk B.J."/>
            <person name="Fernandez D.E."/>
        </authorList>
    </citation>
    <scope>TISSUE SPECIFICITY</scope>
</reference>
<reference key="18">
    <citation type="journal article" date="2007" name="Plant J.">
        <title>The MADS domain factors AGL15 and AGL18 act redundantly as repressors of the floral transition in Arabidopsis.</title>
        <authorList>
            <person name="Adamczyk B.J."/>
            <person name="Lehti-Shiu M.D."/>
            <person name="Fernandez D.E."/>
        </authorList>
    </citation>
    <scope>FUNCTION</scope>
    <scope>DISRUPTION PHENOTYPE</scope>
    <scope>TISSUE SPECIFICITY</scope>
    <scope>DEVELOPMENTAL STAGE</scope>
</reference>
<reference key="19">
    <citation type="journal article" date="2008" name="Plant Physiol.">
        <title>The MADS-domain transcriptional regulator AGAMOUS-LIKE15 promotes somatic embryo development in Arabidopsis and soybean.</title>
        <authorList>
            <person name="Thakare D."/>
            <person name="Tang W."/>
            <person name="Hill K."/>
            <person name="Perry S.E."/>
        </authorList>
    </citation>
    <scope>FUNCTION</scope>
    <scope>DISRUPTION PHENOTYPE</scope>
    <source>
        <strain>cv. Columbia</strain>
    </source>
</reference>
<reference key="20">
    <citation type="journal article" date="2009" name="J. Exp. Bot.">
        <title>Arabidopsis cold shock domain proteins: relationships to floral and silique development.</title>
        <authorList>
            <person name="Nakaminami K."/>
            <person name="Hill K."/>
            <person name="Perry S.E."/>
            <person name="Sentoku N."/>
            <person name="Long J.A."/>
            <person name="Karlson D.T."/>
        </authorList>
    </citation>
    <scope>FUNCTION AS TRANSCRIPTION FACTOR</scope>
    <source>
        <strain>cv. Columbia</strain>
    </source>
</reference>
<reference key="21">
    <citation type="journal article" date="2009" name="Plant Cell">
        <title>Global identification of targets of the Arabidopsis MADS domain protein AGAMOUS-Like15.</title>
        <authorList>
            <person name="Zheng Y."/>
            <person name="Ren N."/>
            <person name="Wang H."/>
            <person name="Stromberg A.J."/>
            <person name="Perry S.E."/>
        </authorList>
    </citation>
    <scope>FUNCTION AS TRANSCRIPTION ACTIVATOR</scope>
    <source>
        <strain>cv. Columbia</strain>
    </source>
</reference>
<proteinExistence type="evidence at protein level"/>
<sequence>MGRGKIEIKRIENANSRQVTFSKRRSGLLKKARELSVLCDAEVAVIVFSKSGKLFEYSSTGMKQTLSRYGNHQSSSASKAEEDCAEVDILKDQLSKLQEKHLQLQGKGLNPLTFKELQSLEQQLYHALITVRERKERLLTNQLEESRLKEQRAELENETLRRQVQELRSFLPSFTHYVPSYIKCFAIDPKNALINHDSKCSLQNTDSDTTLQLGLPGEAHDRRTNEGERESPSSDSVTTNTSSETAERGDQSSLANSPPEAKRQRFSV</sequence>
<gene>
    <name type="primary">AGL15</name>
    <name type="ordered locus">At5g13790</name>
    <name type="ORF">MXE10.6</name>
</gene>
<evidence type="ECO:0000255" key="1">
    <source>
        <dbReference type="PROSITE-ProRule" id="PRU00251"/>
    </source>
</evidence>
<evidence type="ECO:0000255" key="2">
    <source>
        <dbReference type="PROSITE-ProRule" id="PRU00629"/>
    </source>
</evidence>
<evidence type="ECO:0000256" key="3">
    <source>
        <dbReference type="SAM" id="MobiDB-lite"/>
    </source>
</evidence>
<evidence type="ECO:0000269" key="4">
    <source>
    </source>
</evidence>
<evidence type="ECO:0000269" key="5">
    <source>
    </source>
</evidence>
<evidence type="ECO:0000269" key="6">
    <source>
    </source>
</evidence>
<evidence type="ECO:0000269" key="7">
    <source>
    </source>
</evidence>
<evidence type="ECO:0000269" key="8">
    <source>
    </source>
</evidence>
<evidence type="ECO:0000269" key="9">
    <source>
    </source>
</evidence>
<evidence type="ECO:0000269" key="10">
    <source>
    </source>
</evidence>
<evidence type="ECO:0000269" key="11">
    <source>
    </source>
</evidence>
<evidence type="ECO:0000269" key="12">
    <source>
    </source>
</evidence>
<evidence type="ECO:0000269" key="13">
    <source>
    </source>
</evidence>
<evidence type="ECO:0000269" key="14">
    <source>
    </source>
</evidence>
<evidence type="ECO:0000269" key="15">
    <source>
    </source>
</evidence>
<evidence type="ECO:0000269" key="16">
    <source>
    </source>
</evidence>
<evidence type="ECO:0000269" key="17">
    <source>
    </source>
</evidence>
<evidence type="ECO:0000269" key="18">
    <source>
    </source>
</evidence>
<evidence type="ECO:0000269" key="19">
    <source>
    </source>
</evidence>
<feature type="chain" id="PRO_0000199474" description="Agamous-like MADS-box protein AGL15">
    <location>
        <begin position="1"/>
        <end position="268"/>
    </location>
</feature>
<feature type="domain" description="MADS-box" evidence="1">
    <location>
        <begin position="1"/>
        <end position="61"/>
    </location>
</feature>
<feature type="domain" description="K-box" evidence="2">
    <location>
        <begin position="80"/>
        <end position="170"/>
    </location>
</feature>
<feature type="region of interest" description="Disordered" evidence="3">
    <location>
        <begin position="205"/>
        <end position="268"/>
    </location>
</feature>
<feature type="compositionally biased region" description="Basic and acidic residues" evidence="3">
    <location>
        <begin position="218"/>
        <end position="232"/>
    </location>
</feature>
<feature type="compositionally biased region" description="Polar residues" evidence="3">
    <location>
        <begin position="233"/>
        <end position="244"/>
    </location>
</feature>
<comment type="function">
    <text evidence="4 5 6 7 10 11 12 15 16 17 18 19">Transcription factor involved in the negative regulation of flowering, probably through the photoperiodic pathway. Acts both as an activator and as a repressor of transcription. Binds DNA in a sequence-specific manner in large CArG motif 5'-CC (A/T)8 GG-3'. Participates probably in the regulation of programs active during the early stages of embryo development. Prevents premature perianth senescence and abscission, fruits development and seed desiccation. Stimulates the expression of at least DTA4, LEC2, FUS3, ABI3, AT4G38680/CSP2 and GRP2B/CSP4. Can enhance somatic embryo development in vitro.</text>
</comment>
<comment type="subunit">
    <text evidence="13">Homodimer. Interacts with SVP, AGL24, AP1, AGL6, AG, AGL1, AGL11, AGL5, AGL16, SOC1 and AGL21.</text>
</comment>
<comment type="interaction">
    <interactant intactId="EBI-622076">
        <id>Q38847</id>
    </interactant>
    <interactant intactId="EBI-621986">
        <id>Q9SZJ6</id>
        <label>AGL21</label>
    </interactant>
    <organismsDiffer>false</organismsDiffer>
    <experiments>5</experiments>
</comment>
<comment type="subcellular location">
    <subcellularLocation>
        <location>Nucleus</location>
    </subcellularLocation>
    <subcellularLocation>
        <location>Cytoplasm</location>
    </subcellularLocation>
    <text>Associated with the chromosomes during mitosis. Accumulates in the egg cytoplasm before fertilization but moves into the nucleus of the fertilized egg.</text>
</comment>
<comment type="tissue specificity">
    <text evidence="4 5 8 9 12 14 15 19">Expressed at low levels in flowers and siliques. Also present in seedlings. Detected during embryogenesis and accumulates during early seed development (at protein level). Expressed in shoot apices and the base of leaf petioles.</text>
</comment>
<comment type="developmental stage">
    <text evidence="4 5 12 15 19">During the reproductive phase, accumulates in immature buds and at the base of the floral organs, and in the receptacle, ovules, anther filaments, and stigma and style of open flowers. Accumulates before fertilization in the cytoplasm in the cells of the egg apparatus and moves into the nucleus during early stages of development following fertilization in the suspensor, embryo, and endosperm, mainly double fertilization derived tissues (at protein level). Highly expressed in developing embryos. In young seedlings, present in the shoot and root apices, lateral root primordia and throughout the vascular system.</text>
</comment>
<comment type="induction">
    <text evidence="12">By auxin (2,4-D). Feedback loop leading to direct down-regulation by itself.</text>
</comment>
<comment type="disruption phenotype">
    <text evidence="15 16">Early flowering under short-days conditions (SD) when combined with AGL18 disruption. Decreased ability to produce somatic embryos in vitro.</text>
</comment>
<protein>
    <recommendedName>
        <fullName>Agamous-like MADS-box protein AGL15</fullName>
    </recommendedName>
</protein>
<name>AGL15_ARATH</name>
<accession>Q38847</accession>
<accession>Q38839</accession>
<keyword id="KW-0010">Activator</keyword>
<keyword id="KW-0963">Cytoplasm</keyword>
<keyword id="KW-0217">Developmental protein</keyword>
<keyword id="KW-0238">DNA-binding</keyword>
<keyword id="KW-0287">Flowering</keyword>
<keyword id="KW-0539">Nucleus</keyword>
<keyword id="KW-1185">Reference proteome</keyword>
<keyword id="KW-0678">Repressor</keyword>
<keyword id="KW-0804">Transcription</keyword>
<keyword id="KW-0805">Transcription regulation</keyword>
<dbReference type="EMBL" id="U22528">
    <property type="protein sequence ID" value="AAA65653.1"/>
    <property type="molecule type" value="Genomic_DNA"/>
</dbReference>
<dbReference type="EMBL" id="AB011484">
    <property type="protein sequence ID" value="BAB10600.1"/>
    <property type="molecule type" value="Genomic_DNA"/>
</dbReference>
<dbReference type="EMBL" id="AB005230">
    <property type="protein sequence ID" value="BAB10600.1"/>
    <property type="status" value="JOINED"/>
    <property type="molecule type" value="Genomic_DNA"/>
</dbReference>
<dbReference type="EMBL" id="CP002688">
    <property type="protein sequence ID" value="AED91941.1"/>
    <property type="molecule type" value="Genomic_DNA"/>
</dbReference>
<dbReference type="EMBL" id="U20185">
    <property type="protein sequence ID" value="AAC49083.1"/>
    <property type="molecule type" value="mRNA"/>
</dbReference>
<dbReference type="PIR" id="S71200">
    <property type="entry name" value="S71200"/>
</dbReference>
<dbReference type="RefSeq" id="NP_196883.1">
    <property type="nucleotide sequence ID" value="NM_121382.3"/>
</dbReference>
<dbReference type="SMR" id="Q38847"/>
<dbReference type="BioGRID" id="16502">
    <property type="interactions" value="45"/>
</dbReference>
<dbReference type="FunCoup" id="Q38847">
    <property type="interactions" value="37"/>
</dbReference>
<dbReference type="IntAct" id="Q38847">
    <property type="interactions" value="24"/>
</dbReference>
<dbReference type="STRING" id="3702.Q38847"/>
<dbReference type="iPTMnet" id="Q38847"/>
<dbReference type="PaxDb" id="3702-AT5G13790.1"/>
<dbReference type="ProteomicsDB" id="244678"/>
<dbReference type="EnsemblPlants" id="AT5G13790.1">
    <property type="protein sequence ID" value="AT5G13790.1"/>
    <property type="gene ID" value="AT5G13790"/>
</dbReference>
<dbReference type="GeneID" id="831224"/>
<dbReference type="Gramene" id="AT5G13790.1">
    <property type="protein sequence ID" value="AT5G13790.1"/>
    <property type="gene ID" value="AT5G13790"/>
</dbReference>
<dbReference type="KEGG" id="ath:AT5G13790"/>
<dbReference type="Araport" id="AT5G13790"/>
<dbReference type="TAIR" id="AT5G13790">
    <property type="gene designation" value="AGL15"/>
</dbReference>
<dbReference type="eggNOG" id="KOG0014">
    <property type="taxonomic scope" value="Eukaryota"/>
</dbReference>
<dbReference type="HOGENOM" id="CLU_053053_0_2_1"/>
<dbReference type="InParanoid" id="Q38847"/>
<dbReference type="OrthoDB" id="1898716at2759"/>
<dbReference type="PhylomeDB" id="Q38847"/>
<dbReference type="PRO" id="PR:Q38847"/>
<dbReference type="Proteomes" id="UP000006548">
    <property type="component" value="Chromosome 5"/>
</dbReference>
<dbReference type="ExpressionAtlas" id="Q38847">
    <property type="expression patterns" value="baseline and differential"/>
</dbReference>
<dbReference type="GO" id="GO:0005737">
    <property type="term" value="C:cytoplasm"/>
    <property type="evidence" value="ECO:0000314"/>
    <property type="project" value="UniProtKB"/>
</dbReference>
<dbReference type="GO" id="GO:0005634">
    <property type="term" value="C:nucleus"/>
    <property type="evidence" value="ECO:0000314"/>
    <property type="project" value="UniProtKB"/>
</dbReference>
<dbReference type="GO" id="GO:0003677">
    <property type="term" value="F:DNA binding"/>
    <property type="evidence" value="ECO:0000314"/>
    <property type="project" value="UniProtKB"/>
</dbReference>
<dbReference type="GO" id="GO:0003700">
    <property type="term" value="F:DNA-binding transcription factor activity"/>
    <property type="evidence" value="ECO:0000314"/>
    <property type="project" value="TAIR"/>
</dbReference>
<dbReference type="GO" id="GO:0042803">
    <property type="term" value="F:protein homodimerization activity"/>
    <property type="evidence" value="ECO:0000314"/>
    <property type="project" value="UniProtKB"/>
</dbReference>
<dbReference type="GO" id="GO:0000977">
    <property type="term" value="F:RNA polymerase II transcription regulatory region sequence-specific DNA binding"/>
    <property type="evidence" value="ECO:0007669"/>
    <property type="project" value="InterPro"/>
</dbReference>
<dbReference type="GO" id="GO:0043565">
    <property type="term" value="F:sequence-specific DNA binding"/>
    <property type="evidence" value="ECO:0000314"/>
    <property type="project" value="TAIR"/>
</dbReference>
<dbReference type="GO" id="GO:0071365">
    <property type="term" value="P:cellular response to auxin stimulus"/>
    <property type="evidence" value="ECO:0000270"/>
    <property type="project" value="UniProtKB"/>
</dbReference>
<dbReference type="GO" id="GO:0009793">
    <property type="term" value="P:embryo development ending in seed dormancy"/>
    <property type="evidence" value="ECO:0000314"/>
    <property type="project" value="TAIR"/>
</dbReference>
<dbReference type="GO" id="GO:0010227">
    <property type="term" value="P:floral organ abscission"/>
    <property type="evidence" value="ECO:0000315"/>
    <property type="project" value="TAIR"/>
</dbReference>
<dbReference type="GO" id="GO:0060867">
    <property type="term" value="P:fruit abscission"/>
    <property type="evidence" value="ECO:0000315"/>
    <property type="project" value="UniProtKB"/>
</dbReference>
<dbReference type="GO" id="GO:0010047">
    <property type="term" value="P:fruit dehiscence"/>
    <property type="evidence" value="ECO:0000315"/>
    <property type="project" value="UniProtKB"/>
</dbReference>
<dbReference type="GO" id="GO:0045487">
    <property type="term" value="P:gibberellin catabolic process"/>
    <property type="evidence" value="ECO:0000304"/>
    <property type="project" value="TAIR"/>
</dbReference>
<dbReference type="GO" id="GO:0045892">
    <property type="term" value="P:negative regulation of DNA-templated transcription"/>
    <property type="evidence" value="ECO:0000314"/>
    <property type="project" value="UniProtKB"/>
</dbReference>
<dbReference type="GO" id="GO:0060862">
    <property type="term" value="P:negative regulation of floral organ abscission"/>
    <property type="evidence" value="ECO:0000315"/>
    <property type="project" value="UniProtKB"/>
</dbReference>
<dbReference type="GO" id="GO:0009910">
    <property type="term" value="P:negative regulation of flower development"/>
    <property type="evidence" value="ECO:0000315"/>
    <property type="project" value="UniProtKB"/>
</dbReference>
<dbReference type="GO" id="GO:0010629">
    <property type="term" value="P:negative regulation of gene expression"/>
    <property type="evidence" value="ECO:0000315"/>
    <property type="project" value="TAIR"/>
</dbReference>
<dbReference type="GO" id="GO:2000692">
    <property type="term" value="P:negative regulation of seed maturation"/>
    <property type="evidence" value="ECO:0000315"/>
    <property type="project" value="UniProtKB"/>
</dbReference>
<dbReference type="GO" id="GO:0048577">
    <property type="term" value="P:negative regulation of short-day photoperiodism, flowering"/>
    <property type="evidence" value="ECO:0000315"/>
    <property type="project" value="UniProtKB"/>
</dbReference>
<dbReference type="GO" id="GO:0045893">
    <property type="term" value="P:positive regulation of DNA-templated transcription"/>
    <property type="evidence" value="ECO:0000314"/>
    <property type="project" value="UniProtKB"/>
</dbReference>
<dbReference type="GO" id="GO:0045944">
    <property type="term" value="P:positive regulation of transcription by RNA polymerase II"/>
    <property type="evidence" value="ECO:0007669"/>
    <property type="project" value="InterPro"/>
</dbReference>
<dbReference type="GO" id="GO:0010262">
    <property type="term" value="P:somatic embryogenesis"/>
    <property type="evidence" value="ECO:0000315"/>
    <property type="project" value="UniProtKB"/>
</dbReference>
<dbReference type="CDD" id="cd00265">
    <property type="entry name" value="MADS_MEF2_like"/>
    <property type="match status" value="1"/>
</dbReference>
<dbReference type="FunFam" id="3.40.1810.10:FF:000050">
    <property type="entry name" value="AGAMOUS-like 15"/>
    <property type="match status" value="1"/>
</dbReference>
<dbReference type="Gene3D" id="3.40.1810.10">
    <property type="entry name" value="Transcription factor, MADS-box"/>
    <property type="match status" value="1"/>
</dbReference>
<dbReference type="InterPro" id="IPR050142">
    <property type="entry name" value="MADS-box/MEF2_TF"/>
</dbReference>
<dbReference type="InterPro" id="IPR033896">
    <property type="entry name" value="MEF2-like_N"/>
</dbReference>
<dbReference type="InterPro" id="IPR002487">
    <property type="entry name" value="TF_Kbox"/>
</dbReference>
<dbReference type="InterPro" id="IPR002100">
    <property type="entry name" value="TF_MADSbox"/>
</dbReference>
<dbReference type="InterPro" id="IPR036879">
    <property type="entry name" value="TF_MADSbox_sf"/>
</dbReference>
<dbReference type="PANTHER" id="PTHR48019">
    <property type="entry name" value="SERUM RESPONSE FACTOR HOMOLOG"/>
    <property type="match status" value="1"/>
</dbReference>
<dbReference type="Pfam" id="PF01486">
    <property type="entry name" value="K-box"/>
    <property type="match status" value="1"/>
</dbReference>
<dbReference type="Pfam" id="PF00319">
    <property type="entry name" value="SRF-TF"/>
    <property type="match status" value="1"/>
</dbReference>
<dbReference type="PRINTS" id="PR00404">
    <property type="entry name" value="MADSDOMAIN"/>
</dbReference>
<dbReference type="SMART" id="SM00432">
    <property type="entry name" value="MADS"/>
    <property type="match status" value="1"/>
</dbReference>
<dbReference type="SUPFAM" id="SSF55455">
    <property type="entry name" value="SRF-like"/>
    <property type="match status" value="1"/>
</dbReference>
<dbReference type="PROSITE" id="PS51297">
    <property type="entry name" value="K_BOX"/>
    <property type="match status" value="1"/>
</dbReference>
<dbReference type="PROSITE" id="PS00350">
    <property type="entry name" value="MADS_BOX_1"/>
    <property type="match status" value="1"/>
</dbReference>
<dbReference type="PROSITE" id="PS50066">
    <property type="entry name" value="MADS_BOX_2"/>
    <property type="match status" value="1"/>
</dbReference>